<gene>
    <name evidence="1" type="primary">xseA</name>
    <name type="ordered locus">Cla_1351</name>
</gene>
<proteinExistence type="inferred from homology"/>
<protein>
    <recommendedName>
        <fullName evidence="1">Exodeoxyribonuclease 7 large subunit</fullName>
        <ecNumber evidence="1">3.1.11.6</ecNumber>
    </recommendedName>
    <alternativeName>
        <fullName evidence="1">Exodeoxyribonuclease VII large subunit</fullName>
        <shortName evidence="1">Exonuclease VII large subunit</shortName>
    </alternativeName>
</protein>
<organism>
    <name type="scientific">Campylobacter lari (strain RM2100 / D67 / ATCC BAA-1060)</name>
    <dbReference type="NCBI Taxonomy" id="306263"/>
    <lineage>
        <taxon>Bacteria</taxon>
        <taxon>Pseudomonadati</taxon>
        <taxon>Campylobacterota</taxon>
        <taxon>Epsilonproteobacteria</taxon>
        <taxon>Campylobacterales</taxon>
        <taxon>Campylobacteraceae</taxon>
        <taxon>Campylobacter</taxon>
    </lineage>
</organism>
<accession>B9KDM8</accession>
<dbReference type="EC" id="3.1.11.6" evidence="1"/>
<dbReference type="EMBL" id="CP000932">
    <property type="protein sequence ID" value="ACM64666.1"/>
    <property type="molecule type" value="Genomic_DNA"/>
</dbReference>
<dbReference type="RefSeq" id="WP_012662049.1">
    <property type="nucleotide sequence ID" value="NC_012039.1"/>
</dbReference>
<dbReference type="SMR" id="B9KDM8"/>
<dbReference type="STRING" id="306263.Cla_1351"/>
<dbReference type="KEGG" id="cla:CLA_1351"/>
<dbReference type="PATRIC" id="fig|306263.5.peg.1337"/>
<dbReference type="eggNOG" id="COG1570">
    <property type="taxonomic scope" value="Bacteria"/>
</dbReference>
<dbReference type="HOGENOM" id="CLU_023625_2_0_7"/>
<dbReference type="Proteomes" id="UP000007727">
    <property type="component" value="Chromosome"/>
</dbReference>
<dbReference type="GO" id="GO:0005737">
    <property type="term" value="C:cytoplasm"/>
    <property type="evidence" value="ECO:0007669"/>
    <property type="project" value="UniProtKB-SubCell"/>
</dbReference>
<dbReference type="GO" id="GO:0009318">
    <property type="term" value="C:exodeoxyribonuclease VII complex"/>
    <property type="evidence" value="ECO:0007669"/>
    <property type="project" value="InterPro"/>
</dbReference>
<dbReference type="GO" id="GO:0008855">
    <property type="term" value="F:exodeoxyribonuclease VII activity"/>
    <property type="evidence" value="ECO:0007669"/>
    <property type="project" value="UniProtKB-UniRule"/>
</dbReference>
<dbReference type="GO" id="GO:0003676">
    <property type="term" value="F:nucleic acid binding"/>
    <property type="evidence" value="ECO:0007669"/>
    <property type="project" value="InterPro"/>
</dbReference>
<dbReference type="GO" id="GO:0006308">
    <property type="term" value="P:DNA catabolic process"/>
    <property type="evidence" value="ECO:0007669"/>
    <property type="project" value="UniProtKB-UniRule"/>
</dbReference>
<dbReference type="CDD" id="cd04489">
    <property type="entry name" value="ExoVII_LU_OBF"/>
    <property type="match status" value="1"/>
</dbReference>
<dbReference type="HAMAP" id="MF_00378">
    <property type="entry name" value="Exonuc_7_L"/>
    <property type="match status" value="1"/>
</dbReference>
<dbReference type="InterPro" id="IPR003753">
    <property type="entry name" value="Exonuc_VII_L"/>
</dbReference>
<dbReference type="InterPro" id="IPR020579">
    <property type="entry name" value="Exonuc_VII_lsu_C"/>
</dbReference>
<dbReference type="InterPro" id="IPR025824">
    <property type="entry name" value="OB-fold_nuc-bd_dom"/>
</dbReference>
<dbReference type="NCBIfam" id="TIGR00237">
    <property type="entry name" value="xseA"/>
    <property type="match status" value="1"/>
</dbReference>
<dbReference type="PANTHER" id="PTHR30008">
    <property type="entry name" value="EXODEOXYRIBONUCLEASE 7 LARGE SUBUNIT"/>
    <property type="match status" value="1"/>
</dbReference>
<dbReference type="PANTHER" id="PTHR30008:SF0">
    <property type="entry name" value="EXODEOXYRIBONUCLEASE 7 LARGE SUBUNIT"/>
    <property type="match status" value="1"/>
</dbReference>
<dbReference type="Pfam" id="PF02601">
    <property type="entry name" value="Exonuc_VII_L"/>
    <property type="match status" value="1"/>
</dbReference>
<dbReference type="Pfam" id="PF13742">
    <property type="entry name" value="tRNA_anti_2"/>
    <property type="match status" value="1"/>
</dbReference>
<evidence type="ECO:0000255" key="1">
    <source>
        <dbReference type="HAMAP-Rule" id="MF_00378"/>
    </source>
</evidence>
<keyword id="KW-0963">Cytoplasm</keyword>
<keyword id="KW-0269">Exonuclease</keyword>
<keyword id="KW-0378">Hydrolase</keyword>
<keyword id="KW-0540">Nuclease</keyword>
<keyword id="KW-1185">Reference proteome</keyword>
<reference key="1">
    <citation type="journal article" date="2008" name="Foodborne Pathog. Dis.">
        <title>The complete genome sequence and analysis of the human pathogen Campylobacter lari.</title>
        <authorList>
            <person name="Miller W.G."/>
            <person name="Wang G."/>
            <person name="Binnewies T.T."/>
            <person name="Parker C.T."/>
        </authorList>
    </citation>
    <scope>NUCLEOTIDE SEQUENCE [LARGE SCALE GENOMIC DNA]</scope>
    <source>
        <strain>RM2100 / D67 / ATCC BAA-1060</strain>
    </source>
</reference>
<name>EX7L_CAMLR</name>
<feature type="chain" id="PRO_1000200663" description="Exodeoxyribonuclease 7 large subunit">
    <location>
        <begin position="1"/>
        <end position="387"/>
    </location>
</feature>
<comment type="function">
    <text evidence="1">Bidirectionally degrades single-stranded DNA into large acid-insoluble oligonucleotides, which are then degraded further into small acid-soluble oligonucleotides.</text>
</comment>
<comment type="catalytic activity">
    <reaction evidence="1">
        <text>Exonucleolytic cleavage in either 5'- to 3'- or 3'- to 5'-direction to yield nucleoside 5'-phosphates.</text>
        <dbReference type="EC" id="3.1.11.6"/>
    </reaction>
</comment>
<comment type="subunit">
    <text evidence="1">Heterooligomer composed of large and small subunits.</text>
</comment>
<comment type="subcellular location">
    <subcellularLocation>
        <location evidence="1">Cytoplasm</location>
    </subcellularLocation>
</comment>
<comment type="similarity">
    <text evidence="1">Belongs to the XseA family.</text>
</comment>
<sequence>MKVSELNLKAKSLLEFHLDDIELSGEISKITIHGSGHWYFDLKDEKSSIACVMFKGFNQFVQTQPKVGDMLDLRGYVSLYEASGRYQFIAKSMQKTSLGDLEAKFLALKEKLEKEGLFDINAKKSIVKFPKKIGIITSFTSAALQDMLKLISQKEYNLCKITIFNALTQGQSAPNSLINALKKANEYDLDAIILARGGGSREDLFCFNDEELARCIFSLKTPVVSAIGHEIDYVISDFVADLRAPTPSAAIDMIFPNKLSLEQGLDELTMRFKSQMLNHLKFYQNKIDHLQNLAKAKSLENAFFLRKQKLDFLQSQLKSVLNLKLLNYENKLNNFEELLAQHKNFFDKSKNLINLQKDGKNISLEKLKKGDIIKLCSINESKEAQIL</sequence>